<protein>
    <recommendedName>
        <fullName>Threonine dehydratase biosynthetic, chloroplastic</fullName>
        <ecNumber>4.3.1.19</ecNumber>
    </recommendedName>
    <alternativeName>
        <fullName>Threonine deaminase</fullName>
        <shortName>TD</shortName>
    </alternativeName>
</protein>
<organism>
    <name type="scientific">Arabidopsis thaliana</name>
    <name type="common">Mouse-ear cress</name>
    <dbReference type="NCBI Taxonomy" id="3702"/>
    <lineage>
        <taxon>Eukaryota</taxon>
        <taxon>Viridiplantae</taxon>
        <taxon>Streptophyta</taxon>
        <taxon>Embryophyta</taxon>
        <taxon>Tracheophyta</taxon>
        <taxon>Spermatophyta</taxon>
        <taxon>Magnoliopsida</taxon>
        <taxon>eudicotyledons</taxon>
        <taxon>Gunneridae</taxon>
        <taxon>Pentapetalae</taxon>
        <taxon>rosids</taxon>
        <taxon>malvids</taxon>
        <taxon>Brassicales</taxon>
        <taxon>Brassicaceae</taxon>
        <taxon>Camelineae</taxon>
        <taxon>Arabidopsis</taxon>
    </lineage>
</organism>
<reference key="1">
    <citation type="online journal article" date="1998" name="Plant Gene Register">
        <title>Cloning and sequencing of a cDNA encoding threonine dehydratase/ deaminase of Arabidopsis thaliana.</title>
        <authorList>
            <person name="Mourad G."/>
            <person name="Emerick R."/>
            <person name="Marion A."/>
            <person name="Smith A."/>
        </authorList>
        <locator>PGR98-199</locator>
    </citation>
    <scope>NUCLEOTIDE SEQUENCE [MRNA]</scope>
    <source>
        <strain>cv. Columbia</strain>
    </source>
</reference>
<reference key="2">
    <citation type="submission" date="2000-01" db="EMBL/GenBank/DDBJ databases">
        <title>Molecular characterization of the genomic clone, including the promoter sequences, of threonine dehydratase/deaminase from Arabidopsis thaliana.</title>
        <authorList>
            <person name="Mourad G.S."/>
            <person name="Smith A.M."/>
        </authorList>
    </citation>
    <scope>NUCLEOTIDE SEQUENCE [MRNA]</scope>
</reference>
<reference key="3">
    <citation type="online journal article" date="2000" name="Plant Gene Register">
        <title>Molecular cloning and sequencing of a cDNA encoding an isoleucine feedback insensitive threonine dehydratase/deaminase of Arabidopsis thaliana line GM11b.</title>
        <authorList>
            <person name="Mourad G."/>
            <person name="Emerick R."/>
            <person name="Smith A."/>
        </authorList>
        <locator>PGR00-020</locator>
    </citation>
    <scope>NUCLEOTIDE SEQUENCE [MRNA]</scope>
    <scope>MUTANT OMR1</scope>
    <source>
        <strain>cv. Columbia</strain>
    </source>
</reference>
<reference key="4">
    <citation type="journal article" date="2000" name="Nature">
        <title>Sequence and analysis of chromosome 3 of the plant Arabidopsis thaliana.</title>
        <authorList>
            <person name="Salanoubat M."/>
            <person name="Lemcke K."/>
            <person name="Rieger M."/>
            <person name="Ansorge W."/>
            <person name="Unseld M."/>
            <person name="Fartmann B."/>
            <person name="Valle G."/>
            <person name="Bloecker H."/>
            <person name="Perez-Alonso M."/>
            <person name="Obermaier B."/>
            <person name="Delseny M."/>
            <person name="Boutry M."/>
            <person name="Grivell L.A."/>
            <person name="Mache R."/>
            <person name="Puigdomenech P."/>
            <person name="De Simone V."/>
            <person name="Choisne N."/>
            <person name="Artiguenave F."/>
            <person name="Robert C."/>
            <person name="Brottier P."/>
            <person name="Wincker P."/>
            <person name="Cattolico L."/>
            <person name="Weissenbach J."/>
            <person name="Saurin W."/>
            <person name="Quetier F."/>
            <person name="Schaefer M."/>
            <person name="Mueller-Auer S."/>
            <person name="Gabel C."/>
            <person name="Fuchs M."/>
            <person name="Benes V."/>
            <person name="Wurmbach E."/>
            <person name="Drzonek H."/>
            <person name="Erfle H."/>
            <person name="Jordan N."/>
            <person name="Bangert S."/>
            <person name="Wiedelmann R."/>
            <person name="Kranz H."/>
            <person name="Voss H."/>
            <person name="Holland R."/>
            <person name="Brandt P."/>
            <person name="Nyakatura G."/>
            <person name="Vezzi A."/>
            <person name="D'Angelo M."/>
            <person name="Pallavicini A."/>
            <person name="Toppo S."/>
            <person name="Simionati B."/>
            <person name="Conrad A."/>
            <person name="Hornischer K."/>
            <person name="Kauer G."/>
            <person name="Loehnert T.-H."/>
            <person name="Nordsiek G."/>
            <person name="Reichelt J."/>
            <person name="Scharfe M."/>
            <person name="Schoen O."/>
            <person name="Bargues M."/>
            <person name="Terol J."/>
            <person name="Climent J."/>
            <person name="Navarro P."/>
            <person name="Collado C."/>
            <person name="Perez-Perez A."/>
            <person name="Ottenwaelder B."/>
            <person name="Duchemin D."/>
            <person name="Cooke R."/>
            <person name="Laudie M."/>
            <person name="Berger-Llauro C."/>
            <person name="Purnelle B."/>
            <person name="Masuy D."/>
            <person name="de Haan M."/>
            <person name="Maarse A.C."/>
            <person name="Alcaraz J.-P."/>
            <person name="Cottet A."/>
            <person name="Casacuberta E."/>
            <person name="Monfort A."/>
            <person name="Argiriou A."/>
            <person name="Flores M."/>
            <person name="Liguori R."/>
            <person name="Vitale D."/>
            <person name="Mannhaupt G."/>
            <person name="Haase D."/>
            <person name="Schoof H."/>
            <person name="Rudd S."/>
            <person name="Zaccaria P."/>
            <person name="Mewes H.-W."/>
            <person name="Mayer K.F.X."/>
            <person name="Kaul S."/>
            <person name="Town C.D."/>
            <person name="Koo H.L."/>
            <person name="Tallon L.J."/>
            <person name="Jenkins J."/>
            <person name="Rooney T."/>
            <person name="Rizzo M."/>
            <person name="Walts A."/>
            <person name="Utterback T."/>
            <person name="Fujii C.Y."/>
            <person name="Shea T.P."/>
            <person name="Creasy T.H."/>
            <person name="Haas B."/>
            <person name="Maiti R."/>
            <person name="Wu D."/>
            <person name="Peterson J."/>
            <person name="Van Aken S."/>
            <person name="Pai G."/>
            <person name="Militscher J."/>
            <person name="Sellers P."/>
            <person name="Gill J.E."/>
            <person name="Feldblyum T.V."/>
            <person name="Preuss D."/>
            <person name="Lin X."/>
            <person name="Nierman W.C."/>
            <person name="Salzberg S.L."/>
            <person name="White O."/>
            <person name="Venter J.C."/>
            <person name="Fraser C.M."/>
            <person name="Kaneko T."/>
            <person name="Nakamura Y."/>
            <person name="Sato S."/>
            <person name="Kato T."/>
            <person name="Asamizu E."/>
            <person name="Sasamoto S."/>
            <person name="Kimura T."/>
            <person name="Idesawa K."/>
            <person name="Kawashima K."/>
            <person name="Kishida Y."/>
            <person name="Kiyokawa C."/>
            <person name="Kohara M."/>
            <person name="Matsumoto M."/>
            <person name="Matsuno A."/>
            <person name="Muraki A."/>
            <person name="Nakayama S."/>
            <person name="Nakazaki N."/>
            <person name="Shinpo S."/>
            <person name="Takeuchi C."/>
            <person name="Wada T."/>
            <person name="Watanabe A."/>
            <person name="Yamada M."/>
            <person name="Yasuda M."/>
            <person name="Tabata S."/>
        </authorList>
    </citation>
    <scope>NUCLEOTIDE SEQUENCE [LARGE SCALE GENOMIC DNA]</scope>
    <source>
        <strain>cv. Columbia</strain>
    </source>
</reference>
<reference key="5">
    <citation type="journal article" date="2017" name="Plant J.">
        <title>Araport11: a complete reannotation of the Arabidopsis thaliana reference genome.</title>
        <authorList>
            <person name="Cheng C.Y."/>
            <person name="Krishnakumar V."/>
            <person name="Chan A.P."/>
            <person name="Thibaud-Nissen F."/>
            <person name="Schobel S."/>
            <person name="Town C.D."/>
        </authorList>
    </citation>
    <scope>GENOME REANNOTATION</scope>
    <source>
        <strain>cv. Columbia</strain>
    </source>
</reference>
<reference key="6">
    <citation type="journal article" date="2003" name="Science">
        <title>Empirical analysis of transcriptional activity in the Arabidopsis genome.</title>
        <authorList>
            <person name="Yamada K."/>
            <person name="Lim J."/>
            <person name="Dale J.M."/>
            <person name="Chen H."/>
            <person name="Shinn P."/>
            <person name="Palm C.J."/>
            <person name="Southwick A.M."/>
            <person name="Wu H.C."/>
            <person name="Kim C.J."/>
            <person name="Nguyen M."/>
            <person name="Pham P.K."/>
            <person name="Cheuk R.F."/>
            <person name="Karlin-Newmann G."/>
            <person name="Liu S.X."/>
            <person name="Lam B."/>
            <person name="Sakano H."/>
            <person name="Wu T."/>
            <person name="Yu G."/>
            <person name="Miranda M."/>
            <person name="Quach H.L."/>
            <person name="Tripp M."/>
            <person name="Chang C.H."/>
            <person name="Lee J.M."/>
            <person name="Toriumi M.J."/>
            <person name="Chan M.M."/>
            <person name="Tang C.C."/>
            <person name="Onodera C.S."/>
            <person name="Deng J.M."/>
            <person name="Akiyama K."/>
            <person name="Ansari Y."/>
            <person name="Arakawa T."/>
            <person name="Banh J."/>
            <person name="Banno F."/>
            <person name="Bowser L."/>
            <person name="Brooks S.Y."/>
            <person name="Carninci P."/>
            <person name="Chao Q."/>
            <person name="Choy N."/>
            <person name="Enju A."/>
            <person name="Goldsmith A.D."/>
            <person name="Gurjal M."/>
            <person name="Hansen N.F."/>
            <person name="Hayashizaki Y."/>
            <person name="Johnson-Hopson C."/>
            <person name="Hsuan V.W."/>
            <person name="Iida K."/>
            <person name="Karnes M."/>
            <person name="Khan S."/>
            <person name="Koesema E."/>
            <person name="Ishida J."/>
            <person name="Jiang P.X."/>
            <person name="Jones T."/>
            <person name="Kawai J."/>
            <person name="Kamiya A."/>
            <person name="Meyers C."/>
            <person name="Nakajima M."/>
            <person name="Narusaka M."/>
            <person name="Seki M."/>
            <person name="Sakurai T."/>
            <person name="Satou M."/>
            <person name="Tamse R."/>
            <person name="Vaysberg M."/>
            <person name="Wallender E.K."/>
            <person name="Wong C."/>
            <person name="Yamamura Y."/>
            <person name="Yuan S."/>
            <person name="Shinozaki K."/>
            <person name="Davis R.W."/>
            <person name="Theologis A."/>
            <person name="Ecker J.R."/>
        </authorList>
    </citation>
    <scope>NUCLEOTIDE SEQUENCE [LARGE SCALE MRNA]</scope>
    <source>
        <strain>cv. Columbia</strain>
    </source>
</reference>
<evidence type="ECO:0000250" key="1"/>
<evidence type="ECO:0000255" key="2"/>
<evidence type="ECO:0000255" key="3">
    <source>
        <dbReference type="PROSITE-ProRule" id="PRU01008"/>
    </source>
</evidence>
<evidence type="ECO:0000305" key="4"/>
<gene>
    <name type="primary">OMR1</name>
    <name type="ordered locus">At3g10050</name>
    <name type="ORF">T22K18.12</name>
</gene>
<name>THD1_ARATH</name>
<feature type="transit peptide" description="Chloroplast" evidence="2">
    <location>
        <begin position="1"/>
        <end position="91"/>
    </location>
</feature>
<feature type="chain" id="PRO_0000033612" description="Threonine dehydratase biosynthetic, chloroplastic">
    <location>
        <begin position="92"/>
        <end position="592"/>
    </location>
</feature>
<feature type="domain" description="ACT-like 1" evidence="3">
    <location>
        <begin position="419"/>
        <end position="490"/>
    </location>
</feature>
<feature type="domain" description="ACT-like 2" evidence="3">
    <location>
        <begin position="512"/>
        <end position="583"/>
    </location>
</feature>
<feature type="modified residue" description="N6-(pyridoxal phosphate)lysine" evidence="1">
    <location>
        <position position="141"/>
    </location>
</feature>
<feature type="mutagenesis site" description="In omr1; loss of Ile feedback sensitivity; when associated with H-544.">
    <original>R</original>
    <variation>C</variation>
    <location>
        <position position="499"/>
    </location>
</feature>
<feature type="mutagenesis site" description="In omr1; loss of Ile feedback sensitivity; when associated with C-499.">
    <original>R</original>
    <variation>H</variation>
    <location>
        <position position="544"/>
    </location>
</feature>
<accession>Q9ZSS6</accession>
<accession>Q9SPF1</accession>
<proteinExistence type="evidence at protein level"/>
<sequence>MNSVQLPTAQSSLRSHIHRPSKPVVGFTHFSSRSRIAVAVLSRDETSMTPPPPKLPLPRLKVSPNSLQYPAGYLGAVPERTNEAENGSIAEAMEYLTNILSTKVYDIAIESPLQLAKKLSKRLGVRMYLKREDLQPVFSFKLRGAYNMMVKLPADQLAKGVICSSAGNHAQGVALSASKLGCTAVIVMPVTTPEIKWQAVENLGATVVLFGDSYDQAQAHAKIRAEEEGLTFIPPFDHPDVIAGQGTVGMEITRQAKGPLHAIFVPVGGGGLIAGIAAYVKRVSPEVKIIGVEPADANAMALSLHHGERVILDQVGGFADGVAVKEVGEETFRISRNLMDGVVLVTRDAICASIKDMFEEKRNILEPAGALALAGAEAYCKYYGLKDVNVVAITSGANMNFDKLRIVTELANVGRQQEAVLATLMPEKPGSFKQFCELVGPMNISEFKYRCSSEKEAVVLYSVGVHTAGELKALQKRMESSQLKTVNLTTSDLVKDHLRYLMGGRSTVGDEVLCRFTFPERPGALMNFLDSFSPRWNITLFHYRGQGETGANVLVGIQVPEQEMEEFKNRAKALGYDYFLVSDDDYFKLLMH</sequence>
<keyword id="KW-0021">Allosteric enzyme</keyword>
<keyword id="KW-0028">Amino-acid biosynthesis</keyword>
<keyword id="KW-0100">Branched-chain amino acid biosynthesis</keyword>
<keyword id="KW-0150">Chloroplast</keyword>
<keyword id="KW-0412">Isoleucine biosynthesis</keyword>
<keyword id="KW-0456">Lyase</keyword>
<keyword id="KW-0934">Plastid</keyword>
<keyword id="KW-0663">Pyridoxal phosphate</keyword>
<keyword id="KW-1185">Reference proteome</keyword>
<keyword id="KW-0677">Repeat</keyword>
<keyword id="KW-0809">Transit peptide</keyword>
<dbReference type="EC" id="4.3.1.19"/>
<dbReference type="EMBL" id="AF096281">
    <property type="protein sequence ID" value="AAC97936.1"/>
    <property type="molecule type" value="mRNA"/>
</dbReference>
<dbReference type="EMBL" id="AF221984">
    <property type="protein sequence ID" value="AAF32370.1"/>
    <property type="molecule type" value="Genomic_DNA"/>
</dbReference>
<dbReference type="EMBL" id="AF177212">
    <property type="protein sequence ID" value="AAD54324.1"/>
    <property type="molecule type" value="mRNA"/>
</dbReference>
<dbReference type="EMBL" id="AC010927">
    <property type="protein sequence ID" value="AAF04418.1"/>
    <property type="molecule type" value="Genomic_DNA"/>
</dbReference>
<dbReference type="EMBL" id="CP002686">
    <property type="protein sequence ID" value="AEE74854.1"/>
    <property type="molecule type" value="Genomic_DNA"/>
</dbReference>
<dbReference type="EMBL" id="AY065037">
    <property type="protein sequence ID" value="AAL57674.1"/>
    <property type="molecule type" value="mRNA"/>
</dbReference>
<dbReference type="PIR" id="T51712">
    <property type="entry name" value="T51712"/>
</dbReference>
<dbReference type="RefSeq" id="NP_187616.1">
    <property type="nucleotide sequence ID" value="NM_111840.3"/>
</dbReference>
<dbReference type="SMR" id="Q9ZSS6"/>
<dbReference type="FunCoup" id="Q9ZSS6">
    <property type="interactions" value="1586"/>
</dbReference>
<dbReference type="STRING" id="3702.Q9ZSS6"/>
<dbReference type="iPTMnet" id="Q9ZSS6"/>
<dbReference type="PaxDb" id="3702-AT3G10050.1"/>
<dbReference type="ProteomicsDB" id="234328"/>
<dbReference type="EnsemblPlants" id="AT3G10050.1">
    <property type="protein sequence ID" value="AT3G10050.1"/>
    <property type="gene ID" value="AT3G10050"/>
</dbReference>
<dbReference type="GeneID" id="820166"/>
<dbReference type="Gramene" id="AT3G10050.1">
    <property type="protein sequence ID" value="AT3G10050.1"/>
    <property type="gene ID" value="AT3G10050"/>
</dbReference>
<dbReference type="KEGG" id="ath:AT3G10050"/>
<dbReference type="Araport" id="AT3G10050"/>
<dbReference type="TAIR" id="AT3G10050">
    <property type="gene designation" value="OMR1"/>
</dbReference>
<dbReference type="eggNOG" id="KOG1250">
    <property type="taxonomic scope" value="Eukaryota"/>
</dbReference>
<dbReference type="HOGENOM" id="CLU_021152_6_2_1"/>
<dbReference type="InParanoid" id="Q9ZSS6"/>
<dbReference type="OMA" id="TRFEYTK"/>
<dbReference type="OrthoDB" id="4418812at2759"/>
<dbReference type="PhylomeDB" id="Q9ZSS6"/>
<dbReference type="BioCyc" id="ARA:AT3G10050-MONOMER"/>
<dbReference type="SABIO-RK" id="Q9ZSS6"/>
<dbReference type="UniPathway" id="UPA00047">
    <property type="reaction ID" value="UER00054"/>
</dbReference>
<dbReference type="PRO" id="PR:Q9ZSS6"/>
<dbReference type="Proteomes" id="UP000006548">
    <property type="component" value="Chromosome 3"/>
</dbReference>
<dbReference type="ExpressionAtlas" id="Q9ZSS6">
    <property type="expression patterns" value="baseline and differential"/>
</dbReference>
<dbReference type="GO" id="GO:0009507">
    <property type="term" value="C:chloroplast"/>
    <property type="evidence" value="ECO:0007669"/>
    <property type="project" value="UniProtKB-SubCell"/>
</dbReference>
<dbReference type="GO" id="GO:0030170">
    <property type="term" value="F:pyridoxal phosphate binding"/>
    <property type="evidence" value="ECO:0007669"/>
    <property type="project" value="InterPro"/>
</dbReference>
<dbReference type="GO" id="GO:0004794">
    <property type="term" value="F:threonine deaminase activity"/>
    <property type="evidence" value="ECO:0000314"/>
    <property type="project" value="TAIR"/>
</dbReference>
<dbReference type="GO" id="GO:0009097">
    <property type="term" value="P:isoleucine biosynthetic process"/>
    <property type="evidence" value="ECO:0000315"/>
    <property type="project" value="TAIR"/>
</dbReference>
<dbReference type="CDD" id="cd04906">
    <property type="entry name" value="ACT_ThrD-I_1"/>
    <property type="match status" value="1"/>
</dbReference>
<dbReference type="CDD" id="cd04907">
    <property type="entry name" value="ACT_ThrD-I_2"/>
    <property type="match status" value="1"/>
</dbReference>
<dbReference type="CDD" id="cd01562">
    <property type="entry name" value="Thr-dehyd"/>
    <property type="match status" value="1"/>
</dbReference>
<dbReference type="FunFam" id="3.40.50.1100:FF:000008">
    <property type="entry name" value="L-threonine dehydratase"/>
    <property type="match status" value="1"/>
</dbReference>
<dbReference type="FunFam" id="3.40.1020.10:FF:000003">
    <property type="entry name" value="Threonine dehydratase"/>
    <property type="match status" value="1"/>
</dbReference>
<dbReference type="Gene3D" id="3.40.50.1100">
    <property type="match status" value="2"/>
</dbReference>
<dbReference type="Gene3D" id="3.40.1020.10">
    <property type="entry name" value="Biosynthetic Threonine Deaminase, Domain 3"/>
    <property type="match status" value="1"/>
</dbReference>
<dbReference type="InterPro" id="IPR045865">
    <property type="entry name" value="ACT-like_dom_sf"/>
</dbReference>
<dbReference type="InterPro" id="IPR050147">
    <property type="entry name" value="Ser/Thr_Dehydratase"/>
</dbReference>
<dbReference type="InterPro" id="IPR000634">
    <property type="entry name" value="Ser/Thr_deHydtase_PyrdxlP-BS"/>
</dbReference>
<dbReference type="InterPro" id="IPR001721">
    <property type="entry name" value="TD_ACT-like"/>
</dbReference>
<dbReference type="InterPro" id="IPR038110">
    <property type="entry name" value="TD_ACT-like_sf"/>
</dbReference>
<dbReference type="InterPro" id="IPR005787">
    <property type="entry name" value="Thr_deHydtase_biosynth"/>
</dbReference>
<dbReference type="InterPro" id="IPR001926">
    <property type="entry name" value="TrpB-like_PALP"/>
</dbReference>
<dbReference type="InterPro" id="IPR036052">
    <property type="entry name" value="TrpB-like_PALP_sf"/>
</dbReference>
<dbReference type="NCBIfam" id="TIGR01124">
    <property type="entry name" value="ilvA_2Cterm"/>
    <property type="match status" value="1"/>
</dbReference>
<dbReference type="NCBIfam" id="NF006674">
    <property type="entry name" value="PRK09224.1"/>
    <property type="match status" value="1"/>
</dbReference>
<dbReference type="PANTHER" id="PTHR48078:SF11">
    <property type="entry name" value="THREONINE DEHYDRATASE, MITOCHONDRIAL"/>
    <property type="match status" value="1"/>
</dbReference>
<dbReference type="PANTHER" id="PTHR48078">
    <property type="entry name" value="THREONINE DEHYDRATASE, MITOCHONDRIAL-RELATED"/>
    <property type="match status" value="1"/>
</dbReference>
<dbReference type="Pfam" id="PF00291">
    <property type="entry name" value="PALP"/>
    <property type="match status" value="1"/>
</dbReference>
<dbReference type="Pfam" id="PF00585">
    <property type="entry name" value="Thr_dehydrat_C"/>
    <property type="match status" value="2"/>
</dbReference>
<dbReference type="SUPFAM" id="SSF55021">
    <property type="entry name" value="ACT-like"/>
    <property type="match status" value="1"/>
</dbReference>
<dbReference type="SUPFAM" id="SSF53686">
    <property type="entry name" value="Tryptophan synthase beta subunit-like PLP-dependent enzymes"/>
    <property type="match status" value="1"/>
</dbReference>
<dbReference type="PROSITE" id="PS51672">
    <property type="entry name" value="ACT_LIKE"/>
    <property type="match status" value="2"/>
</dbReference>
<dbReference type="PROSITE" id="PS00165">
    <property type="entry name" value="DEHYDRATASE_SER_THR"/>
    <property type="match status" value="1"/>
</dbReference>
<comment type="function">
    <text>Catalyzes the formation of alpha-ketobutyrate from threonine in a two-step reaction. The first step is a dehydration of threonine, followed by rehydration and liberation of ammonia.</text>
</comment>
<comment type="catalytic activity">
    <reaction>
        <text>L-threonine = 2-oxobutanoate + NH4(+)</text>
        <dbReference type="Rhea" id="RHEA:22108"/>
        <dbReference type="ChEBI" id="CHEBI:16763"/>
        <dbReference type="ChEBI" id="CHEBI:28938"/>
        <dbReference type="ChEBI" id="CHEBI:57926"/>
        <dbReference type="EC" id="4.3.1.19"/>
    </reaction>
</comment>
<comment type="cofactor">
    <cofactor evidence="1">
        <name>pyridoxal 5'-phosphate</name>
        <dbReference type="ChEBI" id="CHEBI:597326"/>
    </cofactor>
</comment>
<comment type="activity regulation">
    <text>Allosterically inhibited by isoleucine. Strain GM11b is isoleucine feedback insensitive and is resistant to the antimetabolite L-O-methylthreonine.</text>
</comment>
<comment type="pathway">
    <text>Amino-acid biosynthesis; L-isoleucine biosynthesis; 2-oxobutanoate from L-threonine: step 1/1.</text>
</comment>
<comment type="subcellular location">
    <subcellularLocation>
        <location evidence="1">Plastid</location>
        <location evidence="1">Chloroplast</location>
    </subcellularLocation>
</comment>
<comment type="similarity">
    <text evidence="4">Belongs to the serine/threonine dehydratase family.</text>
</comment>